<comment type="function">
    <text evidence="1">Acts as an anti-CsrA protein, binds CsrA and prevents it from repressing translation of its target genes, one of which is flagellin. Binds to flagellin and participates in the assembly of the flagellum.</text>
</comment>
<comment type="subunit">
    <text evidence="1">Interacts with translational regulator CsrA and flagellin(s).</text>
</comment>
<comment type="subcellular location">
    <subcellularLocation>
        <location evidence="1">Cytoplasm</location>
    </subcellularLocation>
</comment>
<comment type="similarity">
    <text evidence="1">Belongs to the FliW family.</text>
</comment>
<sequence>MKVIETKYNGKLEVAEDRLIAFDQGIPAFEDEKEFVLLPFEEGTPYYTLQSTKTVDLAFIIVNPFSFFPEYRVKLPEATIVQLNITNENDVAIFSLLTVKEPFSETTVNLQAPIVINANKQMGKQLVLGDTAYDRKQPLFQKELVLAKEAK</sequence>
<accession>Q9K6V7</accession>
<gene>
    <name evidence="1" type="primary">fliW</name>
    <name type="ordered locus">BH3618</name>
</gene>
<feature type="chain" id="PRO_0000272967" description="Flagellar assembly factor FliW">
    <location>
        <begin position="1"/>
        <end position="151"/>
    </location>
</feature>
<feature type="strand" evidence="2">
    <location>
        <begin position="1"/>
        <end position="6"/>
    </location>
</feature>
<feature type="turn" evidence="2">
    <location>
        <begin position="7"/>
        <end position="9"/>
    </location>
</feature>
<feature type="strand" evidence="2">
    <location>
        <begin position="10"/>
        <end position="15"/>
    </location>
</feature>
<feature type="helix" evidence="2">
    <location>
        <begin position="16"/>
        <end position="18"/>
    </location>
</feature>
<feature type="strand" evidence="2">
    <location>
        <begin position="19"/>
        <end position="21"/>
    </location>
</feature>
<feature type="strand" evidence="2">
    <location>
        <begin position="34"/>
        <end position="41"/>
    </location>
</feature>
<feature type="strand" evidence="2">
    <location>
        <begin position="46"/>
        <end position="53"/>
    </location>
</feature>
<feature type="strand" evidence="2">
    <location>
        <begin position="58"/>
        <end position="62"/>
    </location>
</feature>
<feature type="helix" evidence="2">
    <location>
        <begin position="64"/>
        <end position="66"/>
    </location>
</feature>
<feature type="helix" evidence="2">
    <location>
        <begin position="77"/>
        <end position="82"/>
    </location>
</feature>
<feature type="helix" evidence="2">
    <location>
        <begin position="88"/>
        <end position="90"/>
    </location>
</feature>
<feature type="strand" evidence="2">
    <location>
        <begin position="91"/>
        <end position="98"/>
    </location>
</feature>
<feature type="helix" evidence="2">
    <location>
        <begin position="103"/>
        <end position="105"/>
    </location>
</feature>
<feature type="strand" evidence="2">
    <location>
        <begin position="110"/>
        <end position="112"/>
    </location>
</feature>
<feature type="strand" evidence="2">
    <location>
        <begin position="114"/>
        <end position="117"/>
    </location>
</feature>
<feature type="turn" evidence="2">
    <location>
        <begin position="118"/>
        <end position="121"/>
    </location>
</feature>
<feature type="strand" evidence="2">
    <location>
        <begin position="122"/>
        <end position="125"/>
    </location>
</feature>
<feature type="strand" evidence="2">
    <location>
        <begin position="137"/>
        <end position="140"/>
    </location>
</feature>
<organism>
    <name type="scientific">Halalkalibacterium halodurans (strain ATCC BAA-125 / DSM 18197 / FERM 7344 / JCM 9153 / C-125)</name>
    <name type="common">Bacillus halodurans</name>
    <dbReference type="NCBI Taxonomy" id="272558"/>
    <lineage>
        <taxon>Bacteria</taxon>
        <taxon>Bacillati</taxon>
        <taxon>Bacillota</taxon>
        <taxon>Bacilli</taxon>
        <taxon>Bacillales</taxon>
        <taxon>Bacillaceae</taxon>
        <taxon>Halalkalibacterium (ex Joshi et al. 2022)</taxon>
    </lineage>
</organism>
<dbReference type="EMBL" id="BA000004">
    <property type="protein sequence ID" value="BAB07337.1"/>
    <property type="molecule type" value="Genomic_DNA"/>
</dbReference>
<dbReference type="PIR" id="B84102">
    <property type="entry name" value="B84102"/>
</dbReference>
<dbReference type="RefSeq" id="WP_010899746.1">
    <property type="nucleotide sequence ID" value="NC_002570.2"/>
</dbReference>
<dbReference type="PDB" id="2AJ7">
    <property type="method" value="X-ray"/>
    <property type="resolution" value="1.67 A"/>
    <property type="chains" value="A/B=1-151"/>
</dbReference>
<dbReference type="PDBsum" id="2AJ7"/>
<dbReference type="SMR" id="Q9K6V7"/>
<dbReference type="STRING" id="272558.gene:10729531"/>
<dbReference type="DNASU" id="892919"/>
<dbReference type="KEGG" id="bha:BH3618"/>
<dbReference type="eggNOG" id="COG1699">
    <property type="taxonomic scope" value="Bacteria"/>
</dbReference>
<dbReference type="HOGENOM" id="CLU_112356_0_2_9"/>
<dbReference type="OrthoDB" id="9801235at2"/>
<dbReference type="EvolutionaryTrace" id="Q9K6V7"/>
<dbReference type="Proteomes" id="UP000001258">
    <property type="component" value="Chromosome"/>
</dbReference>
<dbReference type="GO" id="GO:0005737">
    <property type="term" value="C:cytoplasm"/>
    <property type="evidence" value="ECO:0007669"/>
    <property type="project" value="UniProtKB-SubCell"/>
</dbReference>
<dbReference type="GO" id="GO:0044780">
    <property type="term" value="P:bacterial-type flagellum assembly"/>
    <property type="evidence" value="ECO:0007669"/>
    <property type="project" value="UniProtKB-UniRule"/>
</dbReference>
<dbReference type="GO" id="GO:0006417">
    <property type="term" value="P:regulation of translation"/>
    <property type="evidence" value="ECO:0007669"/>
    <property type="project" value="UniProtKB-KW"/>
</dbReference>
<dbReference type="Gene3D" id="2.30.290.10">
    <property type="entry name" value="BH3618-like"/>
    <property type="match status" value="1"/>
</dbReference>
<dbReference type="HAMAP" id="MF_01185">
    <property type="entry name" value="FliW"/>
    <property type="match status" value="1"/>
</dbReference>
<dbReference type="InterPro" id="IPR003775">
    <property type="entry name" value="Flagellar_assembly_factor_FliW"/>
</dbReference>
<dbReference type="InterPro" id="IPR024046">
    <property type="entry name" value="Flagellar_assmbl_FliW_dom_sf"/>
</dbReference>
<dbReference type="NCBIfam" id="NF009793">
    <property type="entry name" value="PRK13285.1-1"/>
    <property type="match status" value="1"/>
</dbReference>
<dbReference type="PANTHER" id="PTHR39190">
    <property type="entry name" value="FLAGELLAR ASSEMBLY FACTOR FLIW"/>
    <property type="match status" value="1"/>
</dbReference>
<dbReference type="PANTHER" id="PTHR39190:SF1">
    <property type="entry name" value="FLAGELLAR ASSEMBLY FACTOR FLIW"/>
    <property type="match status" value="1"/>
</dbReference>
<dbReference type="Pfam" id="PF02623">
    <property type="entry name" value="FliW"/>
    <property type="match status" value="1"/>
</dbReference>
<dbReference type="SUPFAM" id="SSF141457">
    <property type="entry name" value="BH3618-like"/>
    <property type="match status" value="1"/>
</dbReference>
<keyword id="KW-0002">3D-structure</keyword>
<keyword id="KW-1005">Bacterial flagellum biogenesis</keyword>
<keyword id="KW-0143">Chaperone</keyword>
<keyword id="KW-0963">Cytoplasm</keyword>
<keyword id="KW-1185">Reference proteome</keyword>
<keyword id="KW-0810">Translation regulation</keyword>
<evidence type="ECO:0000255" key="1">
    <source>
        <dbReference type="HAMAP-Rule" id="MF_01185"/>
    </source>
</evidence>
<evidence type="ECO:0007829" key="2">
    <source>
        <dbReference type="PDB" id="2AJ7"/>
    </source>
</evidence>
<protein>
    <recommendedName>
        <fullName evidence="1">Flagellar assembly factor FliW</fullName>
    </recommendedName>
</protein>
<proteinExistence type="evidence at protein level"/>
<reference key="1">
    <citation type="journal article" date="2000" name="Nucleic Acids Res.">
        <title>Complete genome sequence of the alkaliphilic bacterium Bacillus halodurans and genomic sequence comparison with Bacillus subtilis.</title>
        <authorList>
            <person name="Takami H."/>
            <person name="Nakasone K."/>
            <person name="Takaki Y."/>
            <person name="Maeno G."/>
            <person name="Sasaki R."/>
            <person name="Masui N."/>
            <person name="Fuji F."/>
            <person name="Hirama C."/>
            <person name="Nakamura Y."/>
            <person name="Ogasawara N."/>
            <person name="Kuhara S."/>
            <person name="Horikoshi K."/>
        </authorList>
    </citation>
    <scope>NUCLEOTIDE SEQUENCE [LARGE SCALE GENOMIC DNA]</scope>
    <source>
        <strain>ATCC BAA-125 / DSM 18197 / FERM 7344 / JCM 9153 / C-125</strain>
    </source>
</reference>
<reference key="2">
    <citation type="submission" date="2005-08" db="PDB data bank">
        <title>Crystal structure of hypothetical protein (10176242) from Bacillus halodurans at 1.67 A resolution.</title>
        <authorList>
            <consortium name="Joint center for structural genomics (JCSG)"/>
        </authorList>
    </citation>
    <scope>X-RAY CRYSTALLOGRAPHY (1.7 ANGSTROMS)</scope>
</reference>
<name>FLIW_HALH5</name>